<feature type="chain" id="PRO_0000207635" description="Karyogamy protein KAR4">
    <location>
        <begin position="1"/>
        <end position="335"/>
    </location>
</feature>
<feature type="region of interest" description="Disordered" evidence="2">
    <location>
        <begin position="1"/>
        <end position="25"/>
    </location>
</feature>
<feature type="compositionally biased region" description="Polar residues" evidence="2">
    <location>
        <begin position="16"/>
        <end position="25"/>
    </location>
</feature>
<feature type="mutagenesis site" description="Decreases interaction with VIR1." evidence="5">
    <original>C</original>
    <variation>Y</variation>
    <location>
        <position position="127"/>
    </location>
</feature>
<feature type="mutagenesis site" description="Decreases interaction with VIR1." evidence="5">
    <original>F</original>
    <variation>S</variation>
    <location>
        <position position="186"/>
    </location>
</feature>
<feature type="mutagenesis site" description="Decreases interaction with VIR1." evidence="5">
    <original>M</original>
    <variation>R</variation>
    <location>
        <position position="207"/>
    </location>
</feature>
<feature type="mutagenesis site" description="Decreases interaction with VIR1." evidence="5">
    <original>E</original>
    <variation>K</variation>
    <location>
        <position position="260"/>
    </location>
</feature>
<feature type="mutagenesis site" description="Decreases interaction with VIR1." evidence="5">
    <original>G</original>
    <variation>D</variation>
    <location>
        <position position="287"/>
    </location>
</feature>
<protein>
    <recommendedName>
        <fullName>Karyogamy protein KAR4</fullName>
    </recommendedName>
</protein>
<gene>
    <name type="primary">KAR4</name>
    <name type="ordered locus">YCL055W</name>
    <name type="ORF">YCL432</name>
    <name type="ORF">YCL55W</name>
</gene>
<reference key="1">
    <citation type="journal article" date="1992" name="Yeast">
        <title>Nucleotide sequence of D10B, a BamHI fragment on the small-ring chromosome III of Saccharomyces cerevisiae.</title>
        <authorList>
            <person name="Defoor E."/>
            <person name="Debrabandere R."/>
            <person name="Keyers B."/>
            <person name="Voet M."/>
            <person name="Volckaert G."/>
        </authorList>
    </citation>
    <scope>NUCLEOTIDE SEQUENCE [GENOMIC DNA]</scope>
</reference>
<reference key="2">
    <citation type="journal article" date="1992" name="Nature">
        <title>The complete DNA sequence of yeast chromosome III.</title>
        <authorList>
            <person name="Oliver S.G."/>
            <person name="van der Aart Q.J.M."/>
            <person name="Agostoni-Carbone M.L."/>
            <person name="Aigle M."/>
            <person name="Alberghina L."/>
            <person name="Alexandraki D."/>
            <person name="Antoine G."/>
            <person name="Anwar R."/>
            <person name="Ballesta J.P.G."/>
            <person name="Benit P."/>
            <person name="Berben G."/>
            <person name="Bergantino E."/>
            <person name="Biteau N."/>
            <person name="Bolle P.-A."/>
            <person name="Bolotin-Fukuhara M."/>
            <person name="Brown A."/>
            <person name="Brown A.J.P."/>
            <person name="Buhler J.-M."/>
            <person name="Carcano C."/>
            <person name="Carignani G."/>
            <person name="Cederberg H."/>
            <person name="Chanet R."/>
            <person name="Contreras R."/>
            <person name="Crouzet M."/>
            <person name="Daignan-Fornier B."/>
            <person name="Defoor E."/>
            <person name="Delgado M.D."/>
            <person name="Demolder J."/>
            <person name="Doira C."/>
            <person name="Dubois E."/>
            <person name="Dujon B."/>
            <person name="Duesterhoeft A."/>
            <person name="Erdmann D."/>
            <person name="Esteban M."/>
            <person name="Fabre F."/>
            <person name="Fairhead C."/>
            <person name="Faye G."/>
            <person name="Feldmann H."/>
            <person name="Fiers W."/>
            <person name="Francingues-Gaillard M.-C."/>
            <person name="Franco L."/>
            <person name="Frontali L."/>
            <person name="Fukuhara H."/>
            <person name="Fuller L.J."/>
            <person name="Galland P."/>
            <person name="Gent M.E."/>
            <person name="Gigot D."/>
            <person name="Gilliquet V."/>
            <person name="Glansdorff N."/>
            <person name="Goffeau A."/>
            <person name="Grenson M."/>
            <person name="Grisanti P."/>
            <person name="Grivell L.A."/>
            <person name="de Haan M."/>
            <person name="Haasemann M."/>
            <person name="Hatat D."/>
            <person name="Hoenicka J."/>
            <person name="Hegemann J.H."/>
            <person name="Herbert C.J."/>
            <person name="Hilger F."/>
            <person name="Hohmann S."/>
            <person name="Hollenberg C.P."/>
            <person name="Huse K."/>
            <person name="Iborra F."/>
            <person name="Indge K.J."/>
            <person name="Isono K."/>
            <person name="Jacq C."/>
            <person name="Jacquet M."/>
            <person name="James C.M."/>
            <person name="Jauniaux J.-C."/>
            <person name="Jia Y."/>
            <person name="Jimenez A."/>
            <person name="Kelly A."/>
            <person name="Kleinhans U."/>
            <person name="Kreisl P."/>
            <person name="Lanfranchi G."/>
            <person name="Lewis C."/>
            <person name="van der Linden C.G."/>
            <person name="Lucchini G."/>
            <person name="Lutzenkirchen K."/>
            <person name="Maat M.J."/>
            <person name="Mallet L."/>
            <person name="Mannhaupt G."/>
            <person name="Martegani E."/>
            <person name="Mathieu A."/>
            <person name="Maurer C.T.C."/>
            <person name="McConnell D."/>
            <person name="McKee R.A."/>
            <person name="Messenguy F."/>
            <person name="Mewes H.-W."/>
            <person name="Molemans F."/>
            <person name="Montague M.A."/>
            <person name="Muzi Falconi M."/>
            <person name="Navas L."/>
            <person name="Newlon C.S."/>
            <person name="Noone D."/>
            <person name="Pallier C."/>
            <person name="Panzeri L."/>
            <person name="Pearson B.M."/>
            <person name="Perea J."/>
            <person name="Philippsen P."/>
            <person name="Pierard A."/>
            <person name="Planta R.J."/>
            <person name="Plevani P."/>
            <person name="Poetsch B."/>
            <person name="Pohl F.M."/>
            <person name="Purnelle B."/>
            <person name="Ramezani Rad M."/>
            <person name="Rasmussen S.W."/>
            <person name="Raynal A."/>
            <person name="Remacha M.A."/>
            <person name="Richterich P."/>
            <person name="Roberts A.B."/>
            <person name="Rodriguez F."/>
            <person name="Sanz E."/>
            <person name="Schaaff-Gerstenschlaeger I."/>
            <person name="Scherens B."/>
            <person name="Schweitzer B."/>
            <person name="Shu Y."/>
            <person name="Skala J."/>
            <person name="Slonimski P.P."/>
            <person name="Sor F."/>
            <person name="Soustelle C."/>
            <person name="Spiegelberg R."/>
            <person name="Stateva L.I."/>
            <person name="Steensma H.Y."/>
            <person name="Steiner S."/>
            <person name="Thierry A."/>
            <person name="Thireos G."/>
            <person name="Tzermia M."/>
            <person name="Urrestarazu L.A."/>
            <person name="Valle G."/>
            <person name="Vetter I."/>
            <person name="van Vliet-Reedijk J.C."/>
            <person name="Voet M."/>
            <person name="Volckaert G."/>
            <person name="Vreken P."/>
            <person name="Wang H."/>
            <person name="Warmington J.R."/>
            <person name="von Wettstein D."/>
            <person name="Wicksteed B.L."/>
            <person name="Wilson C."/>
            <person name="Wurst H."/>
            <person name="Xu G."/>
            <person name="Yoshikawa A."/>
            <person name="Zimmermann F.K."/>
            <person name="Sgouros J.G."/>
        </authorList>
    </citation>
    <scope>NUCLEOTIDE SEQUENCE [LARGE SCALE GENOMIC DNA]</scope>
    <source>
        <strain>ATCC 204508 / S288c</strain>
    </source>
</reference>
<reference key="3">
    <citation type="journal article" date="2003" name="Nature">
        <title>Global analysis of protein localization in budding yeast.</title>
        <authorList>
            <person name="Huh W.-K."/>
            <person name="Falvo J.V."/>
            <person name="Gerke L.C."/>
            <person name="Carroll A.S."/>
            <person name="Howson R.W."/>
            <person name="Weissman J.S."/>
            <person name="O'Shea E.K."/>
        </authorList>
    </citation>
    <scope>SUBCELLULAR LOCATION [LARGE SCALE ANALYSIS]</scope>
</reference>
<reference key="4">
    <citation type="journal article" date="2014" name="G3 (Bethesda)">
        <title>The reference genome sequence of Saccharomyces cerevisiae: Then and now.</title>
        <authorList>
            <person name="Engel S.R."/>
            <person name="Dietrich F.S."/>
            <person name="Fisk D.G."/>
            <person name="Binkley G."/>
            <person name="Balakrishnan R."/>
            <person name="Costanzo M.C."/>
            <person name="Dwight S.S."/>
            <person name="Hitz B.C."/>
            <person name="Karra K."/>
            <person name="Nash R.S."/>
            <person name="Weng S."/>
            <person name="Wong E.D."/>
            <person name="Lloyd P."/>
            <person name="Skrzypek M.S."/>
            <person name="Miyasato S.R."/>
            <person name="Simison M."/>
            <person name="Cherry J.M."/>
        </authorList>
    </citation>
    <scope>GENOME REANNOTATION</scope>
    <source>
        <strain>ATCC 204508 / S288c</strain>
    </source>
</reference>
<reference key="5">
    <citation type="journal article" date="1996" name="Mol. Cell. Biol.">
        <title>Kar4p, a karyogamy-specific component of the yeast pheromone response pathway.</title>
        <authorList>
            <person name="Kurihara L.J."/>
            <person name="Stewart B.G."/>
            <person name="Gammie A.E."/>
            <person name="Rose M.D."/>
        </authorList>
    </citation>
    <scope>FUNCTION</scope>
</reference>
<reference key="6">
    <citation type="journal article" date="2003" name="Nature">
        <title>Global analysis of protein expression in yeast.</title>
        <authorList>
            <person name="Ghaemmaghami S."/>
            <person name="Huh W.-K."/>
            <person name="Bower K."/>
            <person name="Howson R.W."/>
            <person name="Belle A."/>
            <person name="Dephoure N."/>
            <person name="O'Shea E.K."/>
            <person name="Weissman J.S."/>
        </authorList>
    </citation>
    <scope>LEVEL OF PROTEIN EXPRESSION [LARGE SCALE ANALYSIS]</scope>
</reference>
<reference key="7">
    <citation type="journal article" date="2023" name="Genetics">
        <title>Vir1p, the yeast homolog of virilizer, is required for mRNA m6A methylation and meiosis.</title>
        <authorList>
            <person name="Park Z.M."/>
            <person name="Belnap E."/>
            <person name="Remillard M."/>
            <person name="Rose M.D."/>
        </authorList>
    </citation>
    <scope>FUNCTION</scope>
    <scope>IDENTIFICATION IN THE MIS COMPLEX</scope>
    <scope>INTERACTION WITH VIR1</scope>
    <scope>IDENTIFICATION BY MASS SPECTROMETRY</scope>
    <scope>MUTAGENESIS OF CYS-127; PHE-186; MET-207; GLU-260 AND GLY-287</scope>
</reference>
<comment type="function">
    <text evidence="5 6">Component of the MIS complex, a complex that mediates N6-methyladenosine (m6A) methylation of meiotic mRNAs and is required for initiation of meiosis, progression through the meiotic divisions and sporulation (PubMed:36930734, PubMed:8754797). May assist STE12 in the pheromone-dependent expression of KAR3 and CIK1 (PubMed:8754797).</text>
</comment>
<comment type="subunit">
    <text evidence="5">Component of the MIS (mRNA N6-methyladenosine (m6A) methylation) complex, at least composed of IME4, KAR4, MUM2, SLZ1, and VIR1 (PubMed:36930734). Interacts with VIR1 (PubMed:36930734).</text>
</comment>
<comment type="subcellular location">
    <subcellularLocation>
        <location evidence="3">Nucleus</location>
    </subcellularLocation>
    <subcellularLocation>
        <location evidence="3">Cytoplasm</location>
    </subcellularLocation>
</comment>
<comment type="miscellaneous">
    <text evidence="4">Present with 1690 molecules/cell in log phase SD medium.</text>
</comment>
<comment type="similarity">
    <text evidence="1">Belongs to the MT-A70-like family.</text>
</comment>
<proteinExistence type="evidence at protein level"/>
<dbReference type="EMBL" id="X59720">
    <property type="protein sequence ID" value="CAA42390.1"/>
    <property type="molecule type" value="Genomic_DNA"/>
</dbReference>
<dbReference type="EMBL" id="BK006937">
    <property type="protein sequence ID" value="DAA07431.1"/>
    <property type="molecule type" value="Genomic_DNA"/>
</dbReference>
<dbReference type="PIR" id="S19385">
    <property type="entry name" value="S19385"/>
</dbReference>
<dbReference type="RefSeq" id="NP_009876.1">
    <property type="nucleotide sequence ID" value="NM_001178699.1"/>
</dbReference>
<dbReference type="SMR" id="P25583"/>
<dbReference type="BioGRID" id="30931">
    <property type="interactions" value="82"/>
</dbReference>
<dbReference type="ComplexPortal" id="CPX-3211">
    <property type="entry name" value="MIS complex"/>
</dbReference>
<dbReference type="DIP" id="DIP-1401N"/>
<dbReference type="FunCoup" id="P25583">
    <property type="interactions" value="1497"/>
</dbReference>
<dbReference type="IntAct" id="P25583">
    <property type="interactions" value="8"/>
</dbReference>
<dbReference type="MINT" id="P25583"/>
<dbReference type="STRING" id="4932.YCL055W"/>
<dbReference type="iPTMnet" id="P25583"/>
<dbReference type="PaxDb" id="4932-YCL055W"/>
<dbReference type="PeptideAtlas" id="P25583"/>
<dbReference type="EnsemblFungi" id="YCL055W_mRNA">
    <property type="protein sequence ID" value="YCL055W"/>
    <property type="gene ID" value="YCL055W"/>
</dbReference>
<dbReference type="GeneID" id="850303"/>
<dbReference type="KEGG" id="sce:YCL055W"/>
<dbReference type="AGR" id="SGD:S000000560"/>
<dbReference type="SGD" id="S000000560">
    <property type="gene designation" value="KAR4"/>
</dbReference>
<dbReference type="VEuPathDB" id="FungiDB:YCL055W"/>
<dbReference type="eggNOG" id="KOG2097">
    <property type="taxonomic scope" value="Eukaryota"/>
</dbReference>
<dbReference type="GeneTree" id="ENSGT00550000075003"/>
<dbReference type="HOGENOM" id="CLU_046318_0_0_1"/>
<dbReference type="InParanoid" id="P25583"/>
<dbReference type="OMA" id="FNSELYQ"/>
<dbReference type="OrthoDB" id="14833at2759"/>
<dbReference type="BioCyc" id="YEAST:G3O-29307-MONOMER"/>
<dbReference type="BioGRID-ORCS" id="850303">
    <property type="hits" value="0 hits in 10 CRISPR screens"/>
</dbReference>
<dbReference type="PRO" id="PR:P25583"/>
<dbReference type="Proteomes" id="UP000002311">
    <property type="component" value="Chromosome III"/>
</dbReference>
<dbReference type="RNAct" id="P25583">
    <property type="molecule type" value="protein"/>
</dbReference>
<dbReference type="GO" id="GO:0005737">
    <property type="term" value="C:cytoplasm"/>
    <property type="evidence" value="ECO:0007005"/>
    <property type="project" value="SGD"/>
</dbReference>
<dbReference type="GO" id="GO:0005829">
    <property type="term" value="C:cytosol"/>
    <property type="evidence" value="ECO:0007005"/>
    <property type="project" value="SGD"/>
</dbReference>
<dbReference type="GO" id="GO:0005634">
    <property type="term" value="C:nucleus"/>
    <property type="evidence" value="ECO:0007005"/>
    <property type="project" value="SGD"/>
</dbReference>
<dbReference type="GO" id="GO:0036396">
    <property type="term" value="C:RNA N6-methyladenosine methyltransferase complex"/>
    <property type="evidence" value="ECO:0000315"/>
    <property type="project" value="SGD"/>
</dbReference>
<dbReference type="GO" id="GO:0003700">
    <property type="term" value="F:DNA-binding transcription factor activity"/>
    <property type="evidence" value="ECO:0000314"/>
    <property type="project" value="SGD"/>
</dbReference>
<dbReference type="GO" id="GO:0003729">
    <property type="term" value="F:mRNA binding"/>
    <property type="evidence" value="ECO:0000318"/>
    <property type="project" value="GO_Central"/>
</dbReference>
<dbReference type="GO" id="GO:0000742">
    <property type="term" value="P:karyogamy involved in conjugation with cellular fusion"/>
    <property type="evidence" value="ECO:0000315"/>
    <property type="project" value="SGD"/>
</dbReference>
<dbReference type="GO" id="GO:0051321">
    <property type="term" value="P:meiotic cell cycle"/>
    <property type="evidence" value="ECO:0000315"/>
    <property type="project" value="SGD"/>
</dbReference>
<dbReference type="GO" id="GO:0016556">
    <property type="term" value="P:mRNA modification"/>
    <property type="evidence" value="ECO:0000318"/>
    <property type="project" value="GO_Central"/>
</dbReference>
<dbReference type="GO" id="GO:0045944">
    <property type="term" value="P:positive regulation of transcription by RNA polymerase II"/>
    <property type="evidence" value="ECO:0000315"/>
    <property type="project" value="SGD"/>
</dbReference>
<dbReference type="InterPro" id="IPR045123">
    <property type="entry name" value="METTL14-like"/>
</dbReference>
<dbReference type="InterPro" id="IPR007757">
    <property type="entry name" value="MT-A70-like"/>
</dbReference>
<dbReference type="PANTHER" id="PTHR13107">
    <property type="entry name" value="N6-ADENOSINE-METHYLTRANSFERASE NON-CATALYTIC SUBUNIT"/>
    <property type="match status" value="1"/>
</dbReference>
<dbReference type="PANTHER" id="PTHR13107:SF0">
    <property type="entry name" value="N6-ADENOSINE-METHYLTRANSFERASE NON-CATALYTIC SUBUNIT"/>
    <property type="match status" value="1"/>
</dbReference>
<dbReference type="Pfam" id="PF05063">
    <property type="entry name" value="MT-A70"/>
    <property type="match status" value="1"/>
</dbReference>
<dbReference type="PROSITE" id="PS51143">
    <property type="entry name" value="MT_A70"/>
    <property type="match status" value="1"/>
</dbReference>
<dbReference type="PROSITE" id="PS51592">
    <property type="entry name" value="SAM_MTA70L_2"/>
    <property type="match status" value="1"/>
</dbReference>
<keyword id="KW-0963">Cytoplasm</keyword>
<keyword id="KW-0415">Karyogamy</keyword>
<keyword id="KW-0469">Meiosis</keyword>
<keyword id="KW-0539">Nucleus</keyword>
<keyword id="KW-1185">Reference proteome</keyword>
<name>MET14_YEAST</name>
<organism>
    <name type="scientific">Saccharomyces cerevisiae (strain ATCC 204508 / S288c)</name>
    <name type="common">Baker's yeast</name>
    <dbReference type="NCBI Taxonomy" id="559292"/>
    <lineage>
        <taxon>Eukaryota</taxon>
        <taxon>Fungi</taxon>
        <taxon>Dikarya</taxon>
        <taxon>Ascomycota</taxon>
        <taxon>Saccharomycotina</taxon>
        <taxon>Saccharomycetes</taxon>
        <taxon>Saccharomycetales</taxon>
        <taxon>Saccharomycetaceae</taxon>
        <taxon>Saccharomyces</taxon>
    </lineage>
</organism>
<accession>P25583</accession>
<accession>D6VQW2</accession>
<evidence type="ECO:0000255" key="1">
    <source>
        <dbReference type="PROSITE-ProRule" id="PRU00489"/>
    </source>
</evidence>
<evidence type="ECO:0000256" key="2">
    <source>
        <dbReference type="SAM" id="MobiDB-lite"/>
    </source>
</evidence>
<evidence type="ECO:0000269" key="3">
    <source>
    </source>
</evidence>
<evidence type="ECO:0000269" key="4">
    <source>
    </source>
</evidence>
<evidence type="ECO:0000269" key="5">
    <source>
    </source>
</evidence>
<evidence type="ECO:0000269" key="6">
    <source>
    </source>
</evidence>
<sequence>MAFQDPTYDQNKSRHINNSHLQGPNQETIEMKSKHVSFKPSRDFHTNDYSNNYIHGKSLPQQHVTNIENRVDGYPKLQKLFQAKAKQINQFATTPFGCKIGIDSIVPTLNHWIQNENLTFDVVMIGCLTENQFIYPILTQLPLDRLISKPGFLFIWANSQKINELTKLLNNEIWAKKFRRSEELVFVPIDKKSPFYPGLDQDDETLMEKMQWHCWMCITGTVRRSTDGHLIHCNVDTDLSIETKDTTNGAVPSHLYRIAENFSTATRRLHIIPARTGYETPVKVRPGWVIVSPDVMLDNFSPKRYKEEIANLGSNIPLKNEIELLRPRSPVQKAQ</sequence>